<dbReference type="EMBL" id="AE014298">
    <property type="protein sequence ID" value="AAS65337.2"/>
    <property type="molecule type" value="Genomic_DNA"/>
</dbReference>
<dbReference type="RefSeq" id="NP_996431.2">
    <property type="nucleotide sequence ID" value="NM_206708.2"/>
</dbReference>
<dbReference type="SMR" id="Q7KV13"/>
<dbReference type="BioGRID" id="77722">
    <property type="interactions" value="2"/>
</dbReference>
<dbReference type="FunCoup" id="Q7KV13">
    <property type="interactions" value="168"/>
</dbReference>
<dbReference type="STRING" id="7227.FBpp0289363"/>
<dbReference type="PaxDb" id="7227-FBpp0289363"/>
<dbReference type="EnsemblMetazoa" id="FBtr0300086">
    <property type="protein sequence ID" value="FBpp0289363"/>
    <property type="gene ID" value="FBgn0053237"/>
</dbReference>
<dbReference type="GeneID" id="2768872"/>
<dbReference type="KEGG" id="dme:Dmel_CG33237"/>
<dbReference type="UCSC" id="CG33237-RB">
    <property type="organism name" value="d. melanogaster"/>
</dbReference>
<dbReference type="AGR" id="FB:FBgn0003523"/>
<dbReference type="AGR" id="FB:FBgn0053237"/>
<dbReference type="CTD" id="2768872"/>
<dbReference type="FlyBase" id="FBgn0053237">
    <property type="gene designation" value="Ste:CG33237"/>
</dbReference>
<dbReference type="VEuPathDB" id="VectorBase:FBgn0053237"/>
<dbReference type="eggNOG" id="KOG3092">
    <property type="taxonomic scope" value="Eukaryota"/>
</dbReference>
<dbReference type="GeneTree" id="ENSGT00390000003781"/>
<dbReference type="HOGENOM" id="CLU_034027_3_3_1"/>
<dbReference type="InParanoid" id="Q7KV13"/>
<dbReference type="OrthoDB" id="3971593at2759"/>
<dbReference type="PhylomeDB" id="Q7KV13"/>
<dbReference type="GenomeRNAi" id="2768872"/>
<dbReference type="PRO" id="PR:Q7KV13"/>
<dbReference type="Proteomes" id="UP000000803">
    <property type="component" value="Chromosome X"/>
</dbReference>
<dbReference type="Bgee" id="FBgn0053237">
    <property type="expression patterns" value="Expressed in multicellular organism and 2 other cell types or tissues"/>
</dbReference>
<dbReference type="GO" id="GO:0005737">
    <property type="term" value="C:cytoplasm"/>
    <property type="evidence" value="ECO:0000314"/>
    <property type="project" value="FlyBase"/>
</dbReference>
<dbReference type="GO" id="GO:0005634">
    <property type="term" value="C:nucleus"/>
    <property type="evidence" value="ECO:0000314"/>
    <property type="project" value="FlyBase"/>
</dbReference>
<dbReference type="GO" id="GO:0005956">
    <property type="term" value="C:protein kinase CK2 complex"/>
    <property type="evidence" value="ECO:0000314"/>
    <property type="project" value="FlyBase"/>
</dbReference>
<dbReference type="GO" id="GO:0019887">
    <property type="term" value="F:protein kinase regulator activity"/>
    <property type="evidence" value="ECO:0000315"/>
    <property type="project" value="FlyBase"/>
</dbReference>
<dbReference type="FunFam" id="1.10.1820.10:FF:000005">
    <property type="entry name" value="Casein kinase II subunit beta"/>
    <property type="match status" value="1"/>
</dbReference>
<dbReference type="FunFam" id="2.20.25.20:FF:000001">
    <property type="entry name" value="Casein kinase II subunit beta"/>
    <property type="match status" value="1"/>
</dbReference>
<dbReference type="Gene3D" id="2.20.25.20">
    <property type="match status" value="1"/>
</dbReference>
<dbReference type="Gene3D" id="1.10.1820.10">
    <property type="entry name" value="protein kinase ck2 holoenzyme, chain C, domain 1"/>
    <property type="match status" value="1"/>
</dbReference>
<dbReference type="InterPro" id="IPR016149">
    <property type="entry name" value="Casein_kin_II_reg-sub_N"/>
</dbReference>
<dbReference type="InterPro" id="IPR035991">
    <property type="entry name" value="Casein_kinase_II_beta-like"/>
</dbReference>
<dbReference type="InterPro" id="IPR000704">
    <property type="entry name" value="Casein_kinase_II_reg-sub"/>
</dbReference>
<dbReference type="PANTHER" id="PTHR11740">
    <property type="entry name" value="CASEIN KINASE II SUBUNIT BETA"/>
    <property type="match status" value="1"/>
</dbReference>
<dbReference type="PANTHER" id="PTHR11740:SF0">
    <property type="entry name" value="CASEIN KINASE II SUBUNIT BETA"/>
    <property type="match status" value="1"/>
</dbReference>
<dbReference type="Pfam" id="PF01214">
    <property type="entry name" value="CK_II_beta"/>
    <property type="match status" value="1"/>
</dbReference>
<dbReference type="PRINTS" id="PR00472">
    <property type="entry name" value="CASNKINASEII"/>
</dbReference>
<dbReference type="SMART" id="SM01085">
    <property type="entry name" value="CK_II_beta"/>
    <property type="match status" value="1"/>
</dbReference>
<dbReference type="SUPFAM" id="SSF57798">
    <property type="entry name" value="Casein kinase II beta subunit"/>
    <property type="match status" value="1"/>
</dbReference>
<dbReference type="PROSITE" id="PS01101">
    <property type="entry name" value="CK2_BETA"/>
    <property type="match status" value="1"/>
</dbReference>
<name>STEL2_DROME</name>
<gene>
    <name type="primary">Ste:CG33237</name>
    <name type="ORF">CG33237</name>
</gene>
<accession>Q7KV13</accession>
<sequence length="172" mass="19525">MSSSQNNNSSWIDWFLGIKGNQFLCRVPTDYVQDTFNQMGLEYFSEILDVILKPVIDSSSGLLYGDEKKWYGMIHARYIRSERGLIAMHRKYMRGDFGSCPNISCDRQNTLPVGLSAVWGKSTVKIHCPRCKSNFHPKSDTQLDGAMFGPSFPDIFFSLLPNLTSPLDDPRT</sequence>
<organism>
    <name type="scientific">Drosophila melanogaster</name>
    <name type="common">Fruit fly</name>
    <dbReference type="NCBI Taxonomy" id="7227"/>
    <lineage>
        <taxon>Eukaryota</taxon>
        <taxon>Metazoa</taxon>
        <taxon>Ecdysozoa</taxon>
        <taxon>Arthropoda</taxon>
        <taxon>Hexapoda</taxon>
        <taxon>Insecta</taxon>
        <taxon>Pterygota</taxon>
        <taxon>Neoptera</taxon>
        <taxon>Endopterygota</taxon>
        <taxon>Diptera</taxon>
        <taxon>Brachycera</taxon>
        <taxon>Muscomorpha</taxon>
        <taxon>Ephydroidea</taxon>
        <taxon>Drosophilidae</taxon>
        <taxon>Drosophila</taxon>
        <taxon>Sophophora</taxon>
    </lineage>
</organism>
<protein>
    <recommendedName>
        <fullName>Stellate protein CG33237</fullName>
    </recommendedName>
</protein>
<keyword id="KW-1185">Reference proteome</keyword>
<proteinExistence type="evidence at protein level"/>
<comment type="function">
    <text>Unknown. In males lacking the Y chromosome, its strong overexpression leads to the appearance of proteinaceous star-shaped crystals in the primary spermatocytes causing meiotic drive, possibly by interfering with normal casein kinase 2 activity.</text>
</comment>
<comment type="subunit">
    <text evidence="3">Interacts in vitro with the casein kinase 2 alpha subunit (CkII-alpha). The relevance of such interaction is however unclear in vivo.</text>
</comment>
<comment type="tissue specificity">
    <text evidence="3">Probably not expressed in wild-type flies. In males lacking the Y chromosome, it is testis-specific and constitutes the main component of star-shaped crystals.</text>
</comment>
<comment type="induction">
    <text evidence="1 2">In wild-type flies, it is strongly down-regulated by double-stranded RNA (dsRNA) interference mediated by Su(Ste) transcripts. In males lacking the Y chromosome, the absence of Su(Ste) locus, relieves such down-regulation, explaining why it is strongly expressed.</text>
</comment>
<comment type="miscellaneous">
    <text>There are multiple copies of the stellate gene in fruit fly, encoding proteins that are extremely similar, which makes their individual characterization difficult. Thus, most experiments probably do not discriminate between the different members.</text>
</comment>
<comment type="similarity">
    <text evidence="4">Belongs to the casein kinase 2 subunit beta family.</text>
</comment>
<evidence type="ECO:0000269" key="1">
    <source>
    </source>
</evidence>
<evidence type="ECO:0000269" key="2">
    <source>
    </source>
</evidence>
<evidence type="ECO:0000269" key="3">
    <source>
    </source>
</evidence>
<evidence type="ECO:0000305" key="4"/>
<feature type="chain" id="PRO_0000068260" description="Stellate protein CG33237">
    <location>
        <begin position="1"/>
        <end position="172"/>
    </location>
</feature>
<reference key="1">
    <citation type="journal article" date="2000" name="Science">
        <title>The genome sequence of Drosophila melanogaster.</title>
        <authorList>
            <person name="Adams M.D."/>
            <person name="Celniker S.E."/>
            <person name="Holt R.A."/>
            <person name="Evans C.A."/>
            <person name="Gocayne J.D."/>
            <person name="Amanatides P.G."/>
            <person name="Scherer S.E."/>
            <person name="Li P.W."/>
            <person name="Hoskins R.A."/>
            <person name="Galle R.F."/>
            <person name="George R.A."/>
            <person name="Lewis S.E."/>
            <person name="Richards S."/>
            <person name="Ashburner M."/>
            <person name="Henderson S.N."/>
            <person name="Sutton G.G."/>
            <person name="Wortman J.R."/>
            <person name="Yandell M.D."/>
            <person name="Zhang Q."/>
            <person name="Chen L.X."/>
            <person name="Brandon R.C."/>
            <person name="Rogers Y.-H.C."/>
            <person name="Blazej R.G."/>
            <person name="Champe M."/>
            <person name="Pfeiffer B.D."/>
            <person name="Wan K.H."/>
            <person name="Doyle C."/>
            <person name="Baxter E.G."/>
            <person name="Helt G."/>
            <person name="Nelson C.R."/>
            <person name="Miklos G.L.G."/>
            <person name="Abril J.F."/>
            <person name="Agbayani A."/>
            <person name="An H.-J."/>
            <person name="Andrews-Pfannkoch C."/>
            <person name="Baldwin D."/>
            <person name="Ballew R.M."/>
            <person name="Basu A."/>
            <person name="Baxendale J."/>
            <person name="Bayraktaroglu L."/>
            <person name="Beasley E.M."/>
            <person name="Beeson K.Y."/>
            <person name="Benos P.V."/>
            <person name="Berman B.P."/>
            <person name="Bhandari D."/>
            <person name="Bolshakov S."/>
            <person name="Borkova D."/>
            <person name="Botchan M.R."/>
            <person name="Bouck J."/>
            <person name="Brokstein P."/>
            <person name="Brottier P."/>
            <person name="Burtis K.C."/>
            <person name="Busam D.A."/>
            <person name="Butler H."/>
            <person name="Cadieu E."/>
            <person name="Center A."/>
            <person name="Chandra I."/>
            <person name="Cherry J.M."/>
            <person name="Cawley S."/>
            <person name="Dahlke C."/>
            <person name="Davenport L.B."/>
            <person name="Davies P."/>
            <person name="de Pablos B."/>
            <person name="Delcher A."/>
            <person name="Deng Z."/>
            <person name="Mays A.D."/>
            <person name="Dew I."/>
            <person name="Dietz S.M."/>
            <person name="Dodson K."/>
            <person name="Doup L.E."/>
            <person name="Downes M."/>
            <person name="Dugan-Rocha S."/>
            <person name="Dunkov B.C."/>
            <person name="Dunn P."/>
            <person name="Durbin K.J."/>
            <person name="Evangelista C.C."/>
            <person name="Ferraz C."/>
            <person name="Ferriera S."/>
            <person name="Fleischmann W."/>
            <person name="Fosler C."/>
            <person name="Gabrielian A.E."/>
            <person name="Garg N.S."/>
            <person name="Gelbart W.M."/>
            <person name="Glasser K."/>
            <person name="Glodek A."/>
            <person name="Gong F."/>
            <person name="Gorrell J.H."/>
            <person name="Gu Z."/>
            <person name="Guan P."/>
            <person name="Harris M."/>
            <person name="Harris N.L."/>
            <person name="Harvey D.A."/>
            <person name="Heiman T.J."/>
            <person name="Hernandez J.R."/>
            <person name="Houck J."/>
            <person name="Hostin D."/>
            <person name="Houston K.A."/>
            <person name="Howland T.J."/>
            <person name="Wei M.-H."/>
            <person name="Ibegwam C."/>
            <person name="Jalali M."/>
            <person name="Kalush F."/>
            <person name="Karpen G.H."/>
            <person name="Ke Z."/>
            <person name="Kennison J.A."/>
            <person name="Ketchum K.A."/>
            <person name="Kimmel B.E."/>
            <person name="Kodira C.D."/>
            <person name="Kraft C.L."/>
            <person name="Kravitz S."/>
            <person name="Kulp D."/>
            <person name="Lai Z."/>
            <person name="Lasko P."/>
            <person name="Lei Y."/>
            <person name="Levitsky A.A."/>
            <person name="Li J.H."/>
            <person name="Li Z."/>
            <person name="Liang Y."/>
            <person name="Lin X."/>
            <person name="Liu X."/>
            <person name="Mattei B."/>
            <person name="McIntosh T.C."/>
            <person name="McLeod M.P."/>
            <person name="McPherson D."/>
            <person name="Merkulov G."/>
            <person name="Milshina N.V."/>
            <person name="Mobarry C."/>
            <person name="Morris J."/>
            <person name="Moshrefi A."/>
            <person name="Mount S.M."/>
            <person name="Moy M."/>
            <person name="Murphy B."/>
            <person name="Murphy L."/>
            <person name="Muzny D.M."/>
            <person name="Nelson D.L."/>
            <person name="Nelson D.R."/>
            <person name="Nelson K.A."/>
            <person name="Nixon K."/>
            <person name="Nusskern D.R."/>
            <person name="Pacleb J.M."/>
            <person name="Palazzolo M."/>
            <person name="Pittman G.S."/>
            <person name="Pan S."/>
            <person name="Pollard J."/>
            <person name="Puri V."/>
            <person name="Reese M.G."/>
            <person name="Reinert K."/>
            <person name="Remington K."/>
            <person name="Saunders R.D.C."/>
            <person name="Scheeler F."/>
            <person name="Shen H."/>
            <person name="Shue B.C."/>
            <person name="Siden-Kiamos I."/>
            <person name="Simpson M."/>
            <person name="Skupski M.P."/>
            <person name="Smith T.J."/>
            <person name="Spier E."/>
            <person name="Spradling A.C."/>
            <person name="Stapleton M."/>
            <person name="Strong R."/>
            <person name="Sun E."/>
            <person name="Svirskas R."/>
            <person name="Tector C."/>
            <person name="Turner R."/>
            <person name="Venter E."/>
            <person name="Wang A.H."/>
            <person name="Wang X."/>
            <person name="Wang Z.-Y."/>
            <person name="Wassarman D.A."/>
            <person name="Weinstock G.M."/>
            <person name="Weissenbach J."/>
            <person name="Williams S.M."/>
            <person name="Woodage T."/>
            <person name="Worley K.C."/>
            <person name="Wu D."/>
            <person name="Yang S."/>
            <person name="Yao Q.A."/>
            <person name="Ye J."/>
            <person name="Yeh R.-F."/>
            <person name="Zaveri J.S."/>
            <person name="Zhan M."/>
            <person name="Zhang G."/>
            <person name="Zhao Q."/>
            <person name="Zheng L."/>
            <person name="Zheng X.H."/>
            <person name="Zhong F.N."/>
            <person name="Zhong W."/>
            <person name="Zhou X."/>
            <person name="Zhu S.C."/>
            <person name="Zhu X."/>
            <person name="Smith H.O."/>
            <person name="Gibbs R.A."/>
            <person name="Myers E.W."/>
            <person name="Rubin G.M."/>
            <person name="Venter J.C."/>
        </authorList>
    </citation>
    <scope>NUCLEOTIDE SEQUENCE [LARGE SCALE GENOMIC DNA]</scope>
    <source>
        <strain>Berkeley</strain>
    </source>
</reference>
<reference key="2">
    <citation type="journal article" date="2002" name="Genome Biol.">
        <title>Annotation of the Drosophila melanogaster euchromatic genome: a systematic review.</title>
        <authorList>
            <person name="Misra S."/>
            <person name="Crosby M.A."/>
            <person name="Mungall C.J."/>
            <person name="Matthews B.B."/>
            <person name="Campbell K.S."/>
            <person name="Hradecky P."/>
            <person name="Huang Y."/>
            <person name="Kaminker J.S."/>
            <person name="Millburn G.H."/>
            <person name="Prochnik S.E."/>
            <person name="Smith C.D."/>
            <person name="Tupy J.L."/>
            <person name="Whitfield E.J."/>
            <person name="Bayraktaroglu L."/>
            <person name="Berman B.P."/>
            <person name="Bettencourt B.R."/>
            <person name="Celniker S.E."/>
            <person name="de Grey A.D.N.J."/>
            <person name="Drysdale R.A."/>
            <person name="Harris N.L."/>
            <person name="Richter J."/>
            <person name="Russo S."/>
            <person name="Schroeder A.J."/>
            <person name="Shu S.Q."/>
            <person name="Stapleton M."/>
            <person name="Yamada C."/>
            <person name="Ashburner M."/>
            <person name="Gelbart W.M."/>
            <person name="Rubin G.M."/>
            <person name="Lewis S.E."/>
        </authorList>
    </citation>
    <scope>GENOME REANNOTATION</scope>
    <source>
        <strain>Berkeley</strain>
    </source>
</reference>
<reference key="3">
    <citation type="journal article" date="1995" name="Proc. Natl. Acad. Sci. U.S.A.">
        <title>The Ste locus, a component of the parasitic cry-Ste system of Drosophila melanogaster, encodes a protein that forms crystals in primary spermatocytes and mimics properties of the beta subunit of casein kinase 2.</title>
        <authorList>
            <person name="Bozzetti M.P."/>
            <person name="Massari S."/>
            <person name="Finelli P."/>
            <person name="Meggio F."/>
            <person name="Pinna L.A."/>
            <person name="Boldyreff B."/>
            <person name="Issinger O.G."/>
            <person name="Palumbo G."/>
            <person name="Ciriaco C."/>
            <person name="Bonaccorsi S."/>
            <person name="Pimpinelli S."/>
        </authorList>
    </citation>
    <scope>TISSUE SPECIFICITY</scope>
    <scope>INTERACTION WITH CKII-ALPHA</scope>
</reference>
<reference key="4">
    <citation type="journal article" date="2001" name="Chromosoma">
        <title>A role of the Drosophila homeless gene in repression of Stellate in male meiosis.</title>
        <authorList>
            <person name="Stapleton W."/>
            <person name="Das S."/>
            <person name="McKee B.D."/>
        </authorList>
    </citation>
    <scope>INDUCTION</scope>
</reference>
<reference key="5">
    <citation type="journal article" date="2001" name="Curr. Biol.">
        <title>Double-stranded RNA-mediated silencing of genomic tandem repeats and transposable elements in the D. melanogaster germline.</title>
        <authorList>
            <person name="Aravin A.A."/>
            <person name="Naumova N.M."/>
            <person name="Tulin A.V."/>
            <person name="Vagin V.V."/>
            <person name="Rozovsky Y.M."/>
            <person name="Gvozdev V.A."/>
        </authorList>
    </citation>
    <scope>INDUCTION</scope>
</reference>